<sequence>MKRTYQPNKRKHLKTHGFRARMSTADGRKILAARRAKGRKRLTVSDK</sequence>
<accession>Q5ZZK9</accession>
<name>RL34_MESH2</name>
<keyword id="KW-0687">Ribonucleoprotein</keyword>
<keyword id="KW-0689">Ribosomal protein</keyword>
<dbReference type="EMBL" id="AE017332">
    <property type="protein sequence ID" value="AAV28034.1"/>
    <property type="molecule type" value="Genomic_DNA"/>
</dbReference>
<dbReference type="RefSeq" id="WP_011206529.1">
    <property type="nucleotide sequence ID" value="NC_006360.1"/>
</dbReference>
<dbReference type="SMR" id="Q5ZZK9"/>
<dbReference type="GeneID" id="41334980"/>
<dbReference type="KEGG" id="mhy:mhp699"/>
<dbReference type="eggNOG" id="COG0230">
    <property type="taxonomic scope" value="Bacteria"/>
</dbReference>
<dbReference type="HOGENOM" id="CLU_129938_2_0_14"/>
<dbReference type="PhylomeDB" id="Q5ZZK9"/>
<dbReference type="Proteomes" id="UP000006822">
    <property type="component" value="Chromosome"/>
</dbReference>
<dbReference type="GO" id="GO:1990904">
    <property type="term" value="C:ribonucleoprotein complex"/>
    <property type="evidence" value="ECO:0007669"/>
    <property type="project" value="UniProtKB-KW"/>
</dbReference>
<dbReference type="GO" id="GO:0005840">
    <property type="term" value="C:ribosome"/>
    <property type="evidence" value="ECO:0007669"/>
    <property type="project" value="UniProtKB-KW"/>
</dbReference>
<dbReference type="GO" id="GO:0003735">
    <property type="term" value="F:structural constituent of ribosome"/>
    <property type="evidence" value="ECO:0007669"/>
    <property type="project" value="InterPro"/>
</dbReference>
<dbReference type="GO" id="GO:0006412">
    <property type="term" value="P:translation"/>
    <property type="evidence" value="ECO:0007669"/>
    <property type="project" value="UniProtKB-UniRule"/>
</dbReference>
<dbReference type="FunFam" id="1.10.287.3980:FF:000001">
    <property type="entry name" value="Mitochondrial ribosomal protein L34"/>
    <property type="match status" value="1"/>
</dbReference>
<dbReference type="Gene3D" id="1.10.287.3980">
    <property type="match status" value="1"/>
</dbReference>
<dbReference type="HAMAP" id="MF_00391">
    <property type="entry name" value="Ribosomal_bL34"/>
    <property type="match status" value="1"/>
</dbReference>
<dbReference type="InterPro" id="IPR000271">
    <property type="entry name" value="Ribosomal_bL34"/>
</dbReference>
<dbReference type="InterPro" id="IPR020939">
    <property type="entry name" value="Ribosomal_bL34_CS"/>
</dbReference>
<dbReference type="NCBIfam" id="TIGR01030">
    <property type="entry name" value="rpmH_bact"/>
    <property type="match status" value="1"/>
</dbReference>
<dbReference type="PANTHER" id="PTHR14503:SF4">
    <property type="entry name" value="LARGE RIBOSOMAL SUBUNIT PROTEIN BL34M"/>
    <property type="match status" value="1"/>
</dbReference>
<dbReference type="PANTHER" id="PTHR14503">
    <property type="entry name" value="MITOCHONDRIAL RIBOSOMAL PROTEIN 34 FAMILY MEMBER"/>
    <property type="match status" value="1"/>
</dbReference>
<dbReference type="Pfam" id="PF00468">
    <property type="entry name" value="Ribosomal_L34"/>
    <property type="match status" value="1"/>
</dbReference>
<dbReference type="PROSITE" id="PS00784">
    <property type="entry name" value="RIBOSOMAL_L34"/>
    <property type="match status" value="1"/>
</dbReference>
<evidence type="ECO:0000255" key="1">
    <source>
        <dbReference type="HAMAP-Rule" id="MF_00391"/>
    </source>
</evidence>
<evidence type="ECO:0000305" key="2"/>
<feature type="chain" id="PRO_0000187415" description="Large ribosomal subunit protein bL34">
    <location>
        <begin position="1"/>
        <end position="47"/>
    </location>
</feature>
<gene>
    <name evidence="1" type="primary">rpmH</name>
    <name type="ordered locus">mhp699</name>
</gene>
<proteinExistence type="inferred from homology"/>
<protein>
    <recommendedName>
        <fullName evidence="1">Large ribosomal subunit protein bL34</fullName>
    </recommendedName>
    <alternativeName>
        <fullName evidence="2">50S ribosomal protein L34</fullName>
    </alternativeName>
</protein>
<comment type="similarity">
    <text evidence="1">Belongs to the bacterial ribosomal protein bL34 family.</text>
</comment>
<reference key="1">
    <citation type="journal article" date="2004" name="J. Bacteriol.">
        <title>The genome sequence of Mycoplasma hyopneumoniae strain 232, the agent of swine mycoplasmosis.</title>
        <authorList>
            <person name="Minion F.C."/>
            <person name="Lefkowitz E.J."/>
            <person name="Madsen M.L."/>
            <person name="Cleary B.J."/>
            <person name="Swartzell S.M."/>
            <person name="Mahairas G.G."/>
        </authorList>
    </citation>
    <scope>NUCLEOTIDE SEQUENCE [LARGE SCALE GENOMIC DNA]</scope>
    <source>
        <strain>232</strain>
    </source>
</reference>
<organism>
    <name type="scientific">Mesomycoplasma hyopneumoniae (strain 232)</name>
    <name type="common">Mycoplasma hyopneumoniae</name>
    <dbReference type="NCBI Taxonomy" id="295358"/>
    <lineage>
        <taxon>Bacteria</taxon>
        <taxon>Bacillati</taxon>
        <taxon>Mycoplasmatota</taxon>
        <taxon>Mycoplasmoidales</taxon>
        <taxon>Metamycoplasmataceae</taxon>
        <taxon>Mesomycoplasma</taxon>
    </lineage>
</organism>